<accession>Q570S7</accession>
<accession>O22988</accession>
<accession>Q9T0B4</accession>
<keyword id="KW-0961">Cell wall biogenesis/degradation</keyword>
<keyword id="KW-0328">Glycosyltransferase</keyword>
<keyword id="KW-0333">Golgi apparatus</keyword>
<keyword id="KW-0472">Membrane</keyword>
<keyword id="KW-1185">Reference proteome</keyword>
<keyword id="KW-0808">Transferase</keyword>
<keyword id="KW-0812">Transmembrane</keyword>
<keyword id="KW-1133">Transmembrane helix</keyword>
<comment type="function">
    <text>Thought to be a Golgi-localized beta-glycan synthase that polymerize the backbones of noncellulosic polysaccharides (hemicelluloses) of plant cell wall.</text>
</comment>
<comment type="subcellular location">
    <subcellularLocation>
        <location evidence="3">Golgi apparatus membrane</location>
        <topology evidence="3">Multi-pass membrane protein</topology>
    </subcellularLocation>
</comment>
<comment type="tissue specificity">
    <text evidence="2">Expressed in young seedlings, primarily in the vascular tissue.</text>
</comment>
<comment type="similarity">
    <text evidence="3">Belongs to the glycosyltransferase 2 family. Plant cellulose synthase-like G subfamily.</text>
</comment>
<comment type="sequence caution" evidence="3">
    <conflict type="erroneous gene model prediction">
        <sequence resource="EMBL-CDS" id="AAB63622"/>
    </conflict>
</comment>
<comment type="sequence caution" evidence="3">
    <conflict type="erroneous gene model prediction">
        <sequence resource="EMBL-CDS" id="CAB43901"/>
    </conflict>
</comment>
<comment type="sequence caution" evidence="3">
    <conflict type="erroneous gene model prediction">
        <sequence resource="EMBL-CDS" id="CAB81319"/>
    </conflict>
</comment>
<reference key="1">
    <citation type="journal article" date="1999" name="Nature">
        <title>Sequence and analysis of chromosome 4 of the plant Arabidopsis thaliana.</title>
        <authorList>
            <person name="Mayer K.F.X."/>
            <person name="Schueller C."/>
            <person name="Wambutt R."/>
            <person name="Murphy G."/>
            <person name="Volckaert G."/>
            <person name="Pohl T."/>
            <person name="Duesterhoeft A."/>
            <person name="Stiekema W."/>
            <person name="Entian K.-D."/>
            <person name="Terryn N."/>
            <person name="Harris B."/>
            <person name="Ansorge W."/>
            <person name="Brandt P."/>
            <person name="Grivell L.A."/>
            <person name="Rieger M."/>
            <person name="Weichselgartner M."/>
            <person name="de Simone V."/>
            <person name="Obermaier B."/>
            <person name="Mache R."/>
            <person name="Mueller M."/>
            <person name="Kreis M."/>
            <person name="Delseny M."/>
            <person name="Puigdomenech P."/>
            <person name="Watson M."/>
            <person name="Schmidtheini T."/>
            <person name="Reichert B."/>
            <person name="Portetelle D."/>
            <person name="Perez-Alonso M."/>
            <person name="Boutry M."/>
            <person name="Bancroft I."/>
            <person name="Vos P."/>
            <person name="Hoheisel J."/>
            <person name="Zimmermann W."/>
            <person name="Wedler H."/>
            <person name="Ridley P."/>
            <person name="Langham S.-A."/>
            <person name="McCullagh B."/>
            <person name="Bilham L."/>
            <person name="Robben J."/>
            <person name="van der Schueren J."/>
            <person name="Grymonprez B."/>
            <person name="Chuang Y.-J."/>
            <person name="Vandenbussche F."/>
            <person name="Braeken M."/>
            <person name="Weltjens I."/>
            <person name="Voet M."/>
            <person name="Bastiaens I."/>
            <person name="Aert R."/>
            <person name="Defoor E."/>
            <person name="Weitzenegger T."/>
            <person name="Bothe G."/>
            <person name="Ramsperger U."/>
            <person name="Hilbert H."/>
            <person name="Braun M."/>
            <person name="Holzer E."/>
            <person name="Brandt A."/>
            <person name="Peters S."/>
            <person name="van Staveren M."/>
            <person name="Dirkse W."/>
            <person name="Mooijman P."/>
            <person name="Klein Lankhorst R."/>
            <person name="Rose M."/>
            <person name="Hauf J."/>
            <person name="Koetter P."/>
            <person name="Berneiser S."/>
            <person name="Hempel S."/>
            <person name="Feldpausch M."/>
            <person name="Lamberth S."/>
            <person name="Van den Daele H."/>
            <person name="De Keyser A."/>
            <person name="Buysshaert C."/>
            <person name="Gielen J."/>
            <person name="Villarroel R."/>
            <person name="De Clercq R."/>
            <person name="van Montagu M."/>
            <person name="Rogers J."/>
            <person name="Cronin A."/>
            <person name="Quail M.A."/>
            <person name="Bray-Allen S."/>
            <person name="Clark L."/>
            <person name="Doggett J."/>
            <person name="Hall S."/>
            <person name="Kay M."/>
            <person name="Lennard N."/>
            <person name="McLay K."/>
            <person name="Mayes R."/>
            <person name="Pettett A."/>
            <person name="Rajandream M.A."/>
            <person name="Lyne M."/>
            <person name="Benes V."/>
            <person name="Rechmann S."/>
            <person name="Borkova D."/>
            <person name="Bloecker H."/>
            <person name="Scharfe M."/>
            <person name="Grimm M."/>
            <person name="Loehnert T.-H."/>
            <person name="Dose S."/>
            <person name="de Haan M."/>
            <person name="Maarse A.C."/>
            <person name="Schaefer M."/>
            <person name="Mueller-Auer S."/>
            <person name="Gabel C."/>
            <person name="Fuchs M."/>
            <person name="Fartmann B."/>
            <person name="Granderath K."/>
            <person name="Dauner D."/>
            <person name="Herzl A."/>
            <person name="Neumann S."/>
            <person name="Argiriou A."/>
            <person name="Vitale D."/>
            <person name="Liguori R."/>
            <person name="Piravandi E."/>
            <person name="Massenet O."/>
            <person name="Quigley F."/>
            <person name="Clabauld G."/>
            <person name="Muendlein A."/>
            <person name="Felber R."/>
            <person name="Schnabl S."/>
            <person name="Hiller R."/>
            <person name="Schmidt W."/>
            <person name="Lecharny A."/>
            <person name="Aubourg S."/>
            <person name="Chefdor F."/>
            <person name="Cooke R."/>
            <person name="Berger C."/>
            <person name="Monfort A."/>
            <person name="Casacuberta E."/>
            <person name="Gibbons T."/>
            <person name="Weber N."/>
            <person name="Vandenbol M."/>
            <person name="Bargues M."/>
            <person name="Terol J."/>
            <person name="Torres A."/>
            <person name="Perez-Perez A."/>
            <person name="Purnelle B."/>
            <person name="Bent E."/>
            <person name="Johnson S."/>
            <person name="Tacon D."/>
            <person name="Jesse T."/>
            <person name="Heijnen L."/>
            <person name="Schwarz S."/>
            <person name="Scholler P."/>
            <person name="Heber S."/>
            <person name="Francs P."/>
            <person name="Bielke C."/>
            <person name="Frishman D."/>
            <person name="Haase D."/>
            <person name="Lemcke K."/>
            <person name="Mewes H.-W."/>
            <person name="Stocker S."/>
            <person name="Zaccaria P."/>
            <person name="Bevan M."/>
            <person name="Wilson R.K."/>
            <person name="de la Bastide M."/>
            <person name="Habermann K."/>
            <person name="Parnell L."/>
            <person name="Dedhia N."/>
            <person name="Gnoj L."/>
            <person name="Schutz K."/>
            <person name="Huang E."/>
            <person name="Spiegel L."/>
            <person name="Sekhon M."/>
            <person name="Murray J."/>
            <person name="Sheet P."/>
            <person name="Cordes M."/>
            <person name="Abu-Threideh J."/>
            <person name="Stoneking T."/>
            <person name="Kalicki J."/>
            <person name="Graves T."/>
            <person name="Harmon G."/>
            <person name="Edwards J."/>
            <person name="Latreille P."/>
            <person name="Courtney L."/>
            <person name="Cloud J."/>
            <person name="Abbott A."/>
            <person name="Scott K."/>
            <person name="Johnson D."/>
            <person name="Minx P."/>
            <person name="Bentley D."/>
            <person name="Fulton B."/>
            <person name="Miller N."/>
            <person name="Greco T."/>
            <person name="Kemp K."/>
            <person name="Kramer J."/>
            <person name="Fulton L."/>
            <person name="Mardis E."/>
            <person name="Dante M."/>
            <person name="Pepin K."/>
            <person name="Hillier L.W."/>
            <person name="Nelson J."/>
            <person name="Spieth J."/>
            <person name="Ryan E."/>
            <person name="Andrews S."/>
            <person name="Geisel C."/>
            <person name="Layman D."/>
            <person name="Du H."/>
            <person name="Ali J."/>
            <person name="Berghoff A."/>
            <person name="Jones K."/>
            <person name="Drone K."/>
            <person name="Cotton M."/>
            <person name="Joshu C."/>
            <person name="Antonoiu B."/>
            <person name="Zidanic M."/>
            <person name="Strong C."/>
            <person name="Sun H."/>
            <person name="Lamar B."/>
            <person name="Yordan C."/>
            <person name="Ma P."/>
            <person name="Zhong J."/>
            <person name="Preston R."/>
            <person name="Vil D."/>
            <person name="Shekher M."/>
            <person name="Matero A."/>
            <person name="Shah R."/>
            <person name="Swaby I.K."/>
            <person name="O'Shaughnessy A."/>
            <person name="Rodriguez M."/>
            <person name="Hoffman J."/>
            <person name="Till S."/>
            <person name="Granat S."/>
            <person name="Shohdy N."/>
            <person name="Hasegawa A."/>
            <person name="Hameed A."/>
            <person name="Lodhi M."/>
            <person name="Johnson A."/>
            <person name="Chen E."/>
            <person name="Marra M.A."/>
            <person name="Martienssen R."/>
            <person name="McCombie W.R."/>
        </authorList>
    </citation>
    <scope>NUCLEOTIDE SEQUENCE [LARGE SCALE GENOMIC DNA]</scope>
    <source>
        <strain>cv. Columbia</strain>
    </source>
</reference>
<reference key="2">
    <citation type="journal article" date="2017" name="Plant J.">
        <title>Araport11: a complete reannotation of the Arabidopsis thaliana reference genome.</title>
        <authorList>
            <person name="Cheng C.Y."/>
            <person name="Krishnakumar V."/>
            <person name="Chan A.P."/>
            <person name="Thibaud-Nissen F."/>
            <person name="Schobel S."/>
            <person name="Town C.D."/>
        </authorList>
    </citation>
    <scope>GENOME REANNOTATION</scope>
    <source>
        <strain>cv. Columbia</strain>
    </source>
</reference>
<reference key="3">
    <citation type="submission" date="2005-03" db="EMBL/GenBank/DDBJ databases">
        <title>Large-scale analysis of RIKEN Arabidopsis full-length (RAFL) cDNAs.</title>
        <authorList>
            <person name="Totoki Y."/>
            <person name="Seki M."/>
            <person name="Ishida J."/>
            <person name="Nakajima M."/>
            <person name="Enju A."/>
            <person name="Kamiya A."/>
            <person name="Narusaka M."/>
            <person name="Shin-i T."/>
            <person name="Nakagawa M."/>
            <person name="Sakamoto N."/>
            <person name="Oishi K."/>
            <person name="Kohara Y."/>
            <person name="Kobayashi M."/>
            <person name="Toyoda A."/>
            <person name="Sakaki Y."/>
            <person name="Sakurai T."/>
            <person name="Iida K."/>
            <person name="Akiyama K."/>
            <person name="Satou M."/>
            <person name="Toyoda T."/>
            <person name="Konagaya A."/>
            <person name="Carninci P."/>
            <person name="Kawai J."/>
            <person name="Hayashizaki Y."/>
            <person name="Shinozaki K."/>
        </authorList>
    </citation>
    <scope>NUCLEOTIDE SEQUENCE [LARGE SCALE MRNA]</scope>
    <source>
        <strain>cv. Columbia</strain>
    </source>
</reference>
<reference key="4">
    <citation type="journal article" date="2000" name="Plant Physiol.">
        <title>The cellulose synthase superfamily.</title>
        <authorList>
            <person name="Richmond T.A."/>
            <person name="Somerville C.R."/>
        </authorList>
    </citation>
    <scope>GENE FAMILY</scope>
    <scope>NOMENCLATURE</scope>
</reference>
<reference key="5">
    <citation type="journal article" date="2001" name="Plant Mol. Biol.">
        <title>Integrative approaches to determining Csl function.</title>
        <authorList>
            <person name="Richmond T.A."/>
            <person name="Somerville C.R."/>
        </authorList>
    </citation>
    <scope>TISSUE SPECIFICITY</scope>
</reference>
<evidence type="ECO:0000255" key="1"/>
<evidence type="ECO:0000269" key="2">
    <source>
    </source>
</evidence>
<evidence type="ECO:0000305" key="3"/>
<organism>
    <name type="scientific">Arabidopsis thaliana</name>
    <name type="common">Mouse-ear cress</name>
    <dbReference type="NCBI Taxonomy" id="3702"/>
    <lineage>
        <taxon>Eukaryota</taxon>
        <taxon>Viridiplantae</taxon>
        <taxon>Streptophyta</taxon>
        <taxon>Embryophyta</taxon>
        <taxon>Tracheophyta</taxon>
        <taxon>Spermatophyta</taxon>
        <taxon>Magnoliopsida</taxon>
        <taxon>eudicotyledons</taxon>
        <taxon>Gunneridae</taxon>
        <taxon>Pentapetalae</taxon>
        <taxon>rosids</taxon>
        <taxon>malvids</taxon>
        <taxon>Brassicales</taxon>
        <taxon>Brassicaceae</taxon>
        <taxon>Camelineae</taxon>
        <taxon>Arabidopsis</taxon>
    </lineage>
</organism>
<sequence length="760" mass="86573">METHRKNSVVGNILHTCHPCRRTIPYRIYAIFHTCGIIALMYHHVHSLVTANNTLITCLLLLSDIVLAFMWATTTSLRLNPVHRTECPEKYAAKPEDFPKLDVFICTADPYKEPPMMVVNTALSVMAYEYPSDKISVYVSDDGGSSLTFFALIEAAKFSKQWLPFCKKNNVQDRSPEVYFSSESHSRSDEAENLKMMYEDMKSRVEHVVESGKVETAFITCDQFRGVFDLWTDKFSRHDHPTIIQVLQNSETDMDNTRKYIMPNLIYVSREKSKVSPHHFKAGALNTLLRVSGVMTNSPIILTLDCDMYSNDPATLVRALCYLTDPEIKSGLGYVQFPQKFLGISKNDIYACENKRLFIINMVGFDGLMGPTHVGTGCFFNRRAFYGPPYMLILPEINELKPYRIADKSIKAQDVLSLAHNVAGCIYEYNTNWGSKIGFRYGSLVEDYYTGFMLHCEGWRSVFCNPKKAAFYGDSPKCLVDLVGQQIRWAVGLFEMSFSKYSPITYGIKSLDLLMGLGYCNSPFKPFWSIPLTVYGLLPQLALISGVSVFPKASDPWFWLYIILFFGAYAQDLSDFLLEGGTYRKWWNDQRMLMIKGLSSFFFGFIEFILKTLNLSTPKFNVTSKANDDDEQRKRYEQEIFDFGTSSSMFLPLTTVAIVNLLAFVWGLYGILFCGGELYLELMLVSFAVVNCLPIYGAMVLRKDDGKLSKRTCFLAGNLHVGSYCVKLLRPQVTSPLRLIHNNNTSGWFKRKKHNMNESV</sequence>
<protein>
    <recommendedName>
        <fullName>Cellulose synthase-like protein G1</fullName>
        <shortName>AtCslG1</shortName>
        <ecNumber>2.4.1.-</ecNumber>
    </recommendedName>
</protein>
<dbReference type="EC" id="2.4.1.-"/>
<dbReference type="EMBL" id="AC002343">
    <property type="protein sequence ID" value="AAB63622.1"/>
    <property type="status" value="ALT_SEQ"/>
    <property type="molecule type" value="Genomic_DNA"/>
</dbReference>
<dbReference type="EMBL" id="AL078468">
    <property type="protein sequence ID" value="CAB43901.1"/>
    <property type="status" value="ALT_SEQ"/>
    <property type="molecule type" value="Genomic_DNA"/>
</dbReference>
<dbReference type="EMBL" id="AL161560">
    <property type="protein sequence ID" value="CAB81319.1"/>
    <property type="status" value="ALT_SEQ"/>
    <property type="molecule type" value="Genomic_DNA"/>
</dbReference>
<dbReference type="EMBL" id="CP002687">
    <property type="protein sequence ID" value="AEE84839.1"/>
    <property type="molecule type" value="Genomic_DNA"/>
</dbReference>
<dbReference type="EMBL" id="AK220630">
    <property type="protein sequence ID" value="BAD95063.1"/>
    <property type="molecule type" value="mRNA"/>
</dbReference>
<dbReference type="PIR" id="T08920">
    <property type="entry name" value="T08920"/>
</dbReference>
<dbReference type="RefSeq" id="NP_194132.3">
    <property type="nucleotide sequence ID" value="NM_118533.4"/>
</dbReference>
<dbReference type="SMR" id="Q570S7"/>
<dbReference type="STRING" id="3702.Q570S7"/>
<dbReference type="CAZy" id="GT2">
    <property type="family name" value="Glycosyltransferase Family 2"/>
</dbReference>
<dbReference type="PaxDb" id="3702-AT4G24010.1"/>
<dbReference type="EnsemblPlants" id="AT4G24010.1">
    <property type="protein sequence ID" value="AT4G24010.1"/>
    <property type="gene ID" value="AT4G24010"/>
</dbReference>
<dbReference type="GeneID" id="828501"/>
<dbReference type="Gramene" id="AT4G24010.1">
    <property type="protein sequence ID" value="AT4G24010.1"/>
    <property type="gene ID" value="AT4G24010"/>
</dbReference>
<dbReference type="KEGG" id="ath:AT4G24010"/>
<dbReference type="Araport" id="AT4G24010"/>
<dbReference type="TAIR" id="AT4G24010">
    <property type="gene designation" value="CSLG1"/>
</dbReference>
<dbReference type="eggNOG" id="ENOG502QZE9">
    <property type="taxonomic scope" value="Eukaryota"/>
</dbReference>
<dbReference type="HOGENOM" id="CLU_001418_3_3_1"/>
<dbReference type="InParanoid" id="Q570S7"/>
<dbReference type="OMA" id="IMERCPD"/>
<dbReference type="PhylomeDB" id="Q570S7"/>
<dbReference type="BioCyc" id="ARA:AT4G24010-MONOMER"/>
<dbReference type="PRO" id="PR:Q570S7"/>
<dbReference type="Proteomes" id="UP000006548">
    <property type="component" value="Chromosome 4"/>
</dbReference>
<dbReference type="ExpressionAtlas" id="Q570S7">
    <property type="expression patterns" value="baseline and differential"/>
</dbReference>
<dbReference type="GO" id="GO:0000139">
    <property type="term" value="C:Golgi membrane"/>
    <property type="evidence" value="ECO:0007669"/>
    <property type="project" value="UniProtKB-SubCell"/>
</dbReference>
<dbReference type="GO" id="GO:0016760">
    <property type="term" value="F:cellulose synthase (UDP-forming) activity"/>
    <property type="evidence" value="ECO:0007669"/>
    <property type="project" value="InterPro"/>
</dbReference>
<dbReference type="GO" id="GO:0071555">
    <property type="term" value="P:cell wall organization"/>
    <property type="evidence" value="ECO:0007669"/>
    <property type="project" value="UniProtKB-KW"/>
</dbReference>
<dbReference type="GO" id="GO:0030244">
    <property type="term" value="P:cellulose biosynthetic process"/>
    <property type="evidence" value="ECO:0007669"/>
    <property type="project" value="InterPro"/>
</dbReference>
<dbReference type="FunFam" id="3.90.550.10:FF:000138">
    <property type="entry name" value="Cellulose synthase isolog"/>
    <property type="match status" value="1"/>
</dbReference>
<dbReference type="FunFam" id="3.90.550.10:FF:000135">
    <property type="entry name" value="Cellulose synthase-like protein G3"/>
    <property type="match status" value="1"/>
</dbReference>
<dbReference type="Gene3D" id="3.90.550.10">
    <property type="entry name" value="Spore Coat Polysaccharide Biosynthesis Protein SpsA, Chain A"/>
    <property type="match status" value="2"/>
</dbReference>
<dbReference type="InterPro" id="IPR005150">
    <property type="entry name" value="Cellulose_synth"/>
</dbReference>
<dbReference type="InterPro" id="IPR029044">
    <property type="entry name" value="Nucleotide-diphossugar_trans"/>
</dbReference>
<dbReference type="PANTHER" id="PTHR13301">
    <property type="entry name" value="X-BOX TRANSCRIPTION FACTOR-RELATED"/>
    <property type="match status" value="1"/>
</dbReference>
<dbReference type="Pfam" id="PF03552">
    <property type="entry name" value="Cellulose_synt"/>
    <property type="match status" value="2"/>
</dbReference>
<dbReference type="SUPFAM" id="SSF53448">
    <property type="entry name" value="Nucleotide-diphospho-sugar transferases"/>
    <property type="match status" value="1"/>
</dbReference>
<proteinExistence type="evidence at transcript level"/>
<name>CSLG1_ARATH</name>
<gene>
    <name type="primary">CSLG1</name>
    <name type="ordered locus">At4g24010</name>
    <name type="ORF">T19F6.17</name>
    <name type="ORF">T32A16.180</name>
</gene>
<feature type="chain" id="PRO_0000319353" description="Cellulose synthase-like protein G1">
    <location>
        <begin position="1"/>
        <end position="760"/>
    </location>
</feature>
<feature type="transmembrane region" description="Helical" evidence="1">
    <location>
        <begin position="28"/>
        <end position="48"/>
    </location>
</feature>
<feature type="transmembrane region" description="Helical" evidence="1">
    <location>
        <begin position="54"/>
        <end position="74"/>
    </location>
</feature>
<feature type="transmembrane region" description="Helical" evidence="1">
    <location>
        <begin position="530"/>
        <end position="550"/>
    </location>
</feature>
<feature type="transmembrane region" description="Helical" evidence="1">
    <location>
        <begin position="558"/>
        <end position="578"/>
    </location>
</feature>
<feature type="transmembrane region" description="Helical" evidence="1">
    <location>
        <begin position="593"/>
        <end position="613"/>
    </location>
</feature>
<feature type="transmembrane region" description="Helical" evidence="1">
    <location>
        <begin position="656"/>
        <end position="676"/>
    </location>
</feature>
<feature type="transmembrane region" description="Helical" evidence="1">
    <location>
        <begin position="680"/>
        <end position="700"/>
    </location>
</feature>
<feature type="active site" evidence="1">
    <location>
        <position position="142"/>
    </location>
</feature>
<feature type="active site" evidence="1">
    <location>
        <position position="447"/>
    </location>
</feature>